<sequence length="184" mass="21141">MSSLISKTIKYDPAKDKLITLACGCFWGTEHMYRKYLNDRIVDCKVGYANGEESKKDSPSSVSYKRVCGGDTDFAEVLQVSYNPKVITLRELTDFFFRIHDPTTSNSQGPDKGTQYRSGLFAHSDADLKELAKIKEEWQPKWGNKIATVIEPIKNFYDAEEYHQLYLDKNPQGYACPTHYLREM</sequence>
<name>MSRA_YEAST</name>
<accession>P40029</accession>
<accession>D3DLU2</accession>
<protein>
    <recommendedName>
        <fullName>Peptide methionine sulfoxide reductase</fullName>
        <ecNumber>1.8.4.11</ecNumber>
    </recommendedName>
    <alternativeName>
        <fullName>Peptide-methionine (S)-S-oxide reductase</fullName>
        <shortName>Peptide Met(O) reductase</shortName>
    </alternativeName>
    <alternativeName>
        <fullName>Protein-methionine-S-oxide reductase</fullName>
    </alternativeName>
</protein>
<evidence type="ECO:0000269" key="1">
    <source>
    </source>
</evidence>
<evidence type="ECO:0000305" key="2"/>
<evidence type="ECO:0007744" key="3">
    <source>
    </source>
</evidence>
<evidence type="ECO:0007829" key="4">
    <source>
        <dbReference type="PDB" id="3PIL"/>
    </source>
</evidence>
<evidence type="ECO:0007829" key="5">
    <source>
        <dbReference type="PDB" id="3PIM"/>
    </source>
</evidence>
<feature type="chain" id="PRO_0000138630" description="Peptide methionine sulfoxide reductase">
    <location>
        <begin position="1"/>
        <end position="184"/>
    </location>
</feature>
<feature type="modified residue" description="Phosphoserine" evidence="3">
    <location>
        <position position="58"/>
    </location>
</feature>
<feature type="helix" evidence="5">
    <location>
        <begin position="2"/>
        <end position="4"/>
    </location>
</feature>
<feature type="strand" evidence="4">
    <location>
        <begin position="7"/>
        <end position="9"/>
    </location>
</feature>
<feature type="turn" evidence="5">
    <location>
        <begin position="13"/>
        <end position="15"/>
    </location>
</feature>
<feature type="strand" evidence="5">
    <location>
        <begin position="17"/>
        <end position="24"/>
    </location>
</feature>
<feature type="helix" evidence="5">
    <location>
        <begin position="26"/>
        <end position="37"/>
    </location>
</feature>
<feature type="helix" evidence="5">
    <location>
        <begin position="38"/>
        <end position="40"/>
    </location>
</feature>
<feature type="strand" evidence="5">
    <location>
        <begin position="41"/>
        <end position="51"/>
    </location>
</feature>
<feature type="helix" evidence="4">
    <location>
        <begin position="53"/>
        <end position="55"/>
    </location>
</feature>
<feature type="helix" evidence="4">
    <location>
        <begin position="64"/>
        <end position="67"/>
    </location>
</feature>
<feature type="strand" evidence="5">
    <location>
        <begin position="75"/>
        <end position="82"/>
    </location>
</feature>
<feature type="turn" evidence="5">
    <location>
        <begin position="84"/>
        <end position="86"/>
    </location>
</feature>
<feature type="helix" evidence="5">
    <location>
        <begin position="89"/>
        <end position="96"/>
    </location>
</feature>
<feature type="strand" evidence="4">
    <location>
        <begin position="104"/>
        <end position="108"/>
    </location>
</feature>
<feature type="strand" evidence="4">
    <location>
        <begin position="111"/>
        <end position="113"/>
    </location>
</feature>
<feature type="helix" evidence="5">
    <location>
        <begin position="114"/>
        <end position="116"/>
    </location>
</feature>
<feature type="strand" evidence="5">
    <location>
        <begin position="119"/>
        <end position="124"/>
    </location>
</feature>
<feature type="helix" evidence="5">
    <location>
        <begin position="125"/>
        <end position="138"/>
    </location>
</feature>
<feature type="helix" evidence="5">
    <location>
        <begin position="139"/>
        <end position="142"/>
    </location>
</feature>
<feature type="strand" evidence="5">
    <location>
        <begin position="149"/>
        <end position="158"/>
    </location>
</feature>
<feature type="helix" evidence="5">
    <location>
        <begin position="159"/>
        <end position="166"/>
    </location>
</feature>
<organism>
    <name type="scientific">Saccharomyces cerevisiae (strain ATCC 204508 / S288c)</name>
    <name type="common">Baker's yeast</name>
    <dbReference type="NCBI Taxonomy" id="559292"/>
    <lineage>
        <taxon>Eukaryota</taxon>
        <taxon>Fungi</taxon>
        <taxon>Dikarya</taxon>
        <taxon>Ascomycota</taxon>
        <taxon>Saccharomycotina</taxon>
        <taxon>Saccharomycetes</taxon>
        <taxon>Saccharomycetales</taxon>
        <taxon>Saccharomycetaceae</taxon>
        <taxon>Saccharomyces</taxon>
    </lineage>
</organism>
<proteinExistence type="evidence at protein level"/>
<dbReference type="EC" id="1.8.4.11"/>
<dbReference type="EMBL" id="U18796">
    <property type="protein sequence ID" value="AAB64577.1"/>
    <property type="molecule type" value="Genomic_DNA"/>
</dbReference>
<dbReference type="EMBL" id="AY692798">
    <property type="protein sequence ID" value="AAT92817.1"/>
    <property type="molecule type" value="Genomic_DNA"/>
</dbReference>
<dbReference type="EMBL" id="BK006939">
    <property type="protein sequence ID" value="DAA07696.1"/>
    <property type="molecule type" value="Genomic_DNA"/>
</dbReference>
<dbReference type="PIR" id="S50545">
    <property type="entry name" value="S50545"/>
</dbReference>
<dbReference type="RefSeq" id="NP_010960.1">
    <property type="nucleotide sequence ID" value="NM_001178933.1"/>
</dbReference>
<dbReference type="PDB" id="3PIL">
    <property type="method" value="X-ray"/>
    <property type="resolution" value="2.04 A"/>
    <property type="chains" value="A/B=2-184"/>
</dbReference>
<dbReference type="PDB" id="3PIM">
    <property type="method" value="X-ray"/>
    <property type="resolution" value="1.90 A"/>
    <property type="chains" value="A/B/C=2-184"/>
</dbReference>
<dbReference type="PDB" id="3PIN">
    <property type="method" value="X-ray"/>
    <property type="resolution" value="2.70 A"/>
    <property type="chains" value="B=2-184"/>
</dbReference>
<dbReference type="PDBsum" id="3PIL"/>
<dbReference type="PDBsum" id="3PIM"/>
<dbReference type="PDBsum" id="3PIN"/>
<dbReference type="SMR" id="P40029"/>
<dbReference type="BioGRID" id="36778">
    <property type="interactions" value="135"/>
</dbReference>
<dbReference type="FunCoup" id="P40029">
    <property type="interactions" value="731"/>
</dbReference>
<dbReference type="IntAct" id="P40029">
    <property type="interactions" value="2"/>
</dbReference>
<dbReference type="MINT" id="P40029"/>
<dbReference type="STRING" id="4932.YER042W"/>
<dbReference type="iPTMnet" id="P40029"/>
<dbReference type="PaxDb" id="4932-YER042W"/>
<dbReference type="PeptideAtlas" id="P40029"/>
<dbReference type="EnsemblFungi" id="YER042W_mRNA">
    <property type="protein sequence ID" value="YER042W"/>
    <property type="gene ID" value="YER042W"/>
</dbReference>
<dbReference type="GeneID" id="856765"/>
<dbReference type="KEGG" id="sce:YER042W"/>
<dbReference type="AGR" id="SGD:S000000844"/>
<dbReference type="SGD" id="S000000844">
    <property type="gene designation" value="MXR1"/>
</dbReference>
<dbReference type="VEuPathDB" id="FungiDB:YER042W"/>
<dbReference type="eggNOG" id="KOG1635">
    <property type="taxonomic scope" value="Eukaryota"/>
</dbReference>
<dbReference type="GeneTree" id="ENSGT00390000003823"/>
<dbReference type="HOGENOM" id="CLU_031040_10_2_1"/>
<dbReference type="InParanoid" id="P40029"/>
<dbReference type="OMA" id="LFWESHD"/>
<dbReference type="OrthoDB" id="77405at2759"/>
<dbReference type="BioCyc" id="YEAST:YER042W-MONOMER"/>
<dbReference type="BioGRID-ORCS" id="856765">
    <property type="hits" value="0 hits in 10 CRISPR screens"/>
</dbReference>
<dbReference type="EvolutionaryTrace" id="P40029"/>
<dbReference type="PRO" id="PR:P40029"/>
<dbReference type="Proteomes" id="UP000002311">
    <property type="component" value="Chromosome V"/>
</dbReference>
<dbReference type="RNAct" id="P40029">
    <property type="molecule type" value="protein"/>
</dbReference>
<dbReference type="GO" id="GO:0005737">
    <property type="term" value="C:cytoplasm"/>
    <property type="evidence" value="ECO:0000314"/>
    <property type="project" value="SGD"/>
</dbReference>
<dbReference type="GO" id="GO:0005634">
    <property type="term" value="C:nucleus"/>
    <property type="evidence" value="ECO:0007005"/>
    <property type="project" value="SGD"/>
</dbReference>
<dbReference type="GO" id="GO:0036456">
    <property type="term" value="F:L-methionine-(S)-S-oxide reductase activity"/>
    <property type="evidence" value="ECO:0000318"/>
    <property type="project" value="GO_Central"/>
</dbReference>
<dbReference type="GO" id="GO:0008113">
    <property type="term" value="F:peptide-methionine (S)-S-oxide reductase activity"/>
    <property type="evidence" value="ECO:0000314"/>
    <property type="project" value="SGD"/>
</dbReference>
<dbReference type="GO" id="GO:0034599">
    <property type="term" value="P:cellular response to oxidative stress"/>
    <property type="evidence" value="ECO:0000315"/>
    <property type="project" value="SGD"/>
</dbReference>
<dbReference type="FunFam" id="3.30.1060.10:FF:000006">
    <property type="entry name" value="Peptide methionine sulfoxide reductase"/>
    <property type="match status" value="1"/>
</dbReference>
<dbReference type="Gene3D" id="3.30.1060.10">
    <property type="entry name" value="Peptide methionine sulphoxide reductase MsrA"/>
    <property type="match status" value="1"/>
</dbReference>
<dbReference type="HAMAP" id="MF_01401">
    <property type="entry name" value="MsrA"/>
    <property type="match status" value="1"/>
</dbReference>
<dbReference type="InterPro" id="IPR002569">
    <property type="entry name" value="Met_Sox_Rdtase_MsrA_dom"/>
</dbReference>
<dbReference type="InterPro" id="IPR036509">
    <property type="entry name" value="Met_Sox_Rdtase_MsrA_sf"/>
</dbReference>
<dbReference type="InterPro" id="IPR050162">
    <property type="entry name" value="MsrA_MetSO_reductase"/>
</dbReference>
<dbReference type="NCBIfam" id="TIGR00401">
    <property type="entry name" value="msrA"/>
    <property type="match status" value="1"/>
</dbReference>
<dbReference type="PANTHER" id="PTHR42799">
    <property type="entry name" value="MITOCHONDRIAL PEPTIDE METHIONINE SULFOXIDE REDUCTASE"/>
    <property type="match status" value="1"/>
</dbReference>
<dbReference type="PANTHER" id="PTHR42799:SF2">
    <property type="entry name" value="MITOCHONDRIAL PEPTIDE METHIONINE SULFOXIDE REDUCTASE"/>
    <property type="match status" value="1"/>
</dbReference>
<dbReference type="Pfam" id="PF01625">
    <property type="entry name" value="PMSR"/>
    <property type="match status" value="1"/>
</dbReference>
<dbReference type="SUPFAM" id="SSF55068">
    <property type="entry name" value="Peptide methionine sulfoxide reductase"/>
    <property type="match status" value="1"/>
</dbReference>
<reference key="1">
    <citation type="journal article" date="1997" name="Nature">
        <title>The nucleotide sequence of Saccharomyces cerevisiae chromosome V.</title>
        <authorList>
            <person name="Dietrich F.S."/>
            <person name="Mulligan J.T."/>
            <person name="Hennessy K.M."/>
            <person name="Yelton M.A."/>
            <person name="Allen E."/>
            <person name="Araujo R."/>
            <person name="Aviles E."/>
            <person name="Berno A."/>
            <person name="Brennan T."/>
            <person name="Carpenter J."/>
            <person name="Chen E."/>
            <person name="Cherry J.M."/>
            <person name="Chung E."/>
            <person name="Duncan M."/>
            <person name="Guzman E."/>
            <person name="Hartzell G."/>
            <person name="Hunicke-Smith S."/>
            <person name="Hyman R.W."/>
            <person name="Kayser A."/>
            <person name="Komp C."/>
            <person name="Lashkari D."/>
            <person name="Lew H."/>
            <person name="Lin D."/>
            <person name="Mosedale D."/>
            <person name="Nakahara K."/>
            <person name="Namath A."/>
            <person name="Norgren R."/>
            <person name="Oefner P."/>
            <person name="Oh C."/>
            <person name="Petel F.X."/>
            <person name="Roberts D."/>
            <person name="Sehl P."/>
            <person name="Schramm S."/>
            <person name="Shogren T."/>
            <person name="Smith V."/>
            <person name="Taylor P."/>
            <person name="Wei Y."/>
            <person name="Botstein D."/>
            <person name="Davis R.W."/>
        </authorList>
    </citation>
    <scope>NUCLEOTIDE SEQUENCE [LARGE SCALE GENOMIC DNA]</scope>
    <source>
        <strain>ATCC 204508 / S288c</strain>
    </source>
</reference>
<reference key="2">
    <citation type="journal article" date="2014" name="G3 (Bethesda)">
        <title>The reference genome sequence of Saccharomyces cerevisiae: Then and now.</title>
        <authorList>
            <person name="Engel S.R."/>
            <person name="Dietrich F.S."/>
            <person name="Fisk D.G."/>
            <person name="Binkley G."/>
            <person name="Balakrishnan R."/>
            <person name="Costanzo M.C."/>
            <person name="Dwight S.S."/>
            <person name="Hitz B.C."/>
            <person name="Karra K."/>
            <person name="Nash R.S."/>
            <person name="Weng S."/>
            <person name="Wong E.D."/>
            <person name="Lloyd P."/>
            <person name="Skrzypek M.S."/>
            <person name="Miyasato S.R."/>
            <person name="Simison M."/>
            <person name="Cherry J.M."/>
        </authorList>
    </citation>
    <scope>GENOME REANNOTATION</scope>
    <source>
        <strain>ATCC 204508 / S288c</strain>
    </source>
</reference>
<reference key="3">
    <citation type="journal article" date="2007" name="Genome Res.">
        <title>Approaching a complete repository of sequence-verified protein-encoding clones for Saccharomyces cerevisiae.</title>
        <authorList>
            <person name="Hu Y."/>
            <person name="Rolfs A."/>
            <person name="Bhullar B."/>
            <person name="Murthy T.V.S."/>
            <person name="Zhu C."/>
            <person name="Berger M.F."/>
            <person name="Camargo A.A."/>
            <person name="Kelley F."/>
            <person name="McCarron S."/>
            <person name="Jepson D."/>
            <person name="Richardson A."/>
            <person name="Raphael J."/>
            <person name="Moreira D."/>
            <person name="Taycher E."/>
            <person name="Zuo D."/>
            <person name="Mohr S."/>
            <person name="Kane M.F."/>
            <person name="Williamson J."/>
            <person name="Simpson A.J.G."/>
            <person name="Bulyk M.L."/>
            <person name="Harlow E."/>
            <person name="Marsischky G."/>
            <person name="Kolodner R.D."/>
            <person name="LaBaer J."/>
        </authorList>
    </citation>
    <scope>NUCLEOTIDE SEQUENCE [GENOMIC DNA]</scope>
    <source>
        <strain>ATCC 204508 / S288c</strain>
    </source>
</reference>
<reference key="4">
    <citation type="journal article" date="1999" name="Appl. Environ. Microbiol.">
        <title>Inactivation of MXR1 abolishes formation of dimethyl sulfide from dimethyl sulfoxide in Saccharomyces cerevisiae.</title>
        <authorList>
            <person name="Hansen J."/>
        </authorList>
    </citation>
    <scope>CHARACTERIZATION</scope>
</reference>
<reference key="5">
    <citation type="journal article" date="2000" name="J. Biol. Chem.">
        <title>Identification and characterization of a putative active site for peptide methionine sulfoxide reductase (MsrA) and its substrate stereospecificity.</title>
        <authorList>
            <person name="Moskovitz J."/>
            <person name="Poston J.M."/>
            <person name="Berlett B.S."/>
            <person name="Nosworthy N.J."/>
            <person name="Szczepanowski R."/>
            <person name="Stadtman E.R."/>
        </authorList>
    </citation>
    <scope>MUTAGENESIS</scope>
</reference>
<reference key="6">
    <citation type="journal article" date="2003" name="Nature">
        <title>Global analysis of protein expression in yeast.</title>
        <authorList>
            <person name="Ghaemmaghami S."/>
            <person name="Huh W.-K."/>
            <person name="Bower K."/>
            <person name="Howson R.W."/>
            <person name="Belle A."/>
            <person name="Dephoure N."/>
            <person name="O'Shea E.K."/>
            <person name="Weissman J.S."/>
        </authorList>
    </citation>
    <scope>LEVEL OF PROTEIN EXPRESSION [LARGE SCALE ANALYSIS]</scope>
</reference>
<reference key="7">
    <citation type="journal article" date="2008" name="Mol. Cell. Proteomics">
        <title>A multidimensional chromatography technology for in-depth phosphoproteome analysis.</title>
        <authorList>
            <person name="Albuquerque C.P."/>
            <person name="Smolka M.B."/>
            <person name="Payne S.H."/>
            <person name="Bafna V."/>
            <person name="Eng J."/>
            <person name="Zhou H."/>
        </authorList>
    </citation>
    <scope>PHOSPHORYLATION [LARGE SCALE ANALYSIS] AT SER-58</scope>
    <scope>IDENTIFICATION BY MASS SPECTROMETRY [LARGE SCALE ANALYSIS]</scope>
</reference>
<reference key="8">
    <citation type="journal article" date="2009" name="Science">
        <title>Global analysis of Cdk1 substrate phosphorylation sites provides insights into evolution.</title>
        <authorList>
            <person name="Holt L.J."/>
            <person name="Tuch B.B."/>
            <person name="Villen J."/>
            <person name="Johnson A.D."/>
            <person name="Gygi S.P."/>
            <person name="Morgan D.O."/>
        </authorList>
    </citation>
    <scope>IDENTIFICATION BY MASS SPECTROMETRY [LARGE SCALE ANALYSIS]</scope>
</reference>
<gene>
    <name type="primary">MXR1</name>
    <name type="ordered locus">YER042W</name>
</gene>
<comment type="function">
    <text>Has an important function as a repair enzyme for proteins that have been inactivated by oxidation. Catalyzes the reversible oxidation-reduction of methionine sulfoxide in proteins to methionine. Also able to reduce dimethyl sulfoxide (DMSO) as well, with DMS as the product.</text>
</comment>
<comment type="catalytic activity">
    <reaction>
        <text>L-methionyl-[protein] + [thioredoxin]-disulfide + H2O = L-methionyl-(S)-S-oxide-[protein] + [thioredoxin]-dithiol</text>
        <dbReference type="Rhea" id="RHEA:14217"/>
        <dbReference type="Rhea" id="RHEA-COMP:10698"/>
        <dbReference type="Rhea" id="RHEA-COMP:10700"/>
        <dbReference type="Rhea" id="RHEA-COMP:12313"/>
        <dbReference type="Rhea" id="RHEA-COMP:12315"/>
        <dbReference type="ChEBI" id="CHEBI:15377"/>
        <dbReference type="ChEBI" id="CHEBI:16044"/>
        <dbReference type="ChEBI" id="CHEBI:29950"/>
        <dbReference type="ChEBI" id="CHEBI:44120"/>
        <dbReference type="ChEBI" id="CHEBI:50058"/>
        <dbReference type="EC" id="1.8.4.11"/>
    </reaction>
</comment>
<comment type="catalytic activity">
    <reaction>
        <text>[thioredoxin]-disulfide + L-methionine + H2O = L-methionine (S)-S-oxide + [thioredoxin]-dithiol</text>
        <dbReference type="Rhea" id="RHEA:19993"/>
        <dbReference type="Rhea" id="RHEA-COMP:10698"/>
        <dbReference type="Rhea" id="RHEA-COMP:10700"/>
        <dbReference type="ChEBI" id="CHEBI:15377"/>
        <dbReference type="ChEBI" id="CHEBI:29950"/>
        <dbReference type="ChEBI" id="CHEBI:50058"/>
        <dbReference type="ChEBI" id="CHEBI:57844"/>
        <dbReference type="ChEBI" id="CHEBI:58772"/>
        <dbReference type="EC" id="1.8.4.11"/>
    </reaction>
</comment>
<comment type="miscellaneous">
    <text evidence="1">Present with 3070 molecules/cell in log phase SD medium.</text>
</comment>
<comment type="similarity">
    <text evidence="2">Belongs to the MsrA Met sulfoxide reductase family.</text>
</comment>
<keyword id="KW-0002">3D-structure</keyword>
<keyword id="KW-0560">Oxidoreductase</keyword>
<keyword id="KW-0597">Phosphoprotein</keyword>
<keyword id="KW-1185">Reference proteome</keyword>